<dbReference type="EMBL" id="CR858554">
    <property type="protein sequence ID" value="CAH90781.1"/>
    <property type="molecule type" value="mRNA"/>
</dbReference>
<dbReference type="SMR" id="Q5RBS9"/>
<dbReference type="STRING" id="9601.ENSPPYP00000002405"/>
<dbReference type="Ensembl" id="ENSPPYT00000054561.1">
    <property type="protein sequence ID" value="ENSPPYP00000028266.1"/>
    <property type="gene ID" value="ENSPPYG00000002076.3"/>
</dbReference>
<dbReference type="eggNOG" id="KOG1531">
    <property type="taxonomic scope" value="Eukaryota"/>
</dbReference>
<dbReference type="GeneTree" id="ENSGT00390000006837"/>
<dbReference type="HOGENOM" id="CLU_050669_4_0_1"/>
<dbReference type="InParanoid" id="Q5RBS9"/>
<dbReference type="OMA" id="MQITSAM"/>
<dbReference type="Proteomes" id="UP000001595">
    <property type="component" value="Chromosome 10"/>
</dbReference>
<dbReference type="GO" id="GO:0005743">
    <property type="term" value="C:mitochondrial inner membrane"/>
    <property type="evidence" value="ECO:0007669"/>
    <property type="project" value="UniProtKB-SubCell"/>
</dbReference>
<dbReference type="GO" id="GO:0045259">
    <property type="term" value="C:proton-transporting ATP synthase complex"/>
    <property type="evidence" value="ECO:0000250"/>
    <property type="project" value="UniProtKB"/>
</dbReference>
<dbReference type="GO" id="GO:0046933">
    <property type="term" value="F:proton-transporting ATP synthase activity, rotational mechanism"/>
    <property type="evidence" value="ECO:0007669"/>
    <property type="project" value="InterPro"/>
</dbReference>
<dbReference type="CDD" id="cd12151">
    <property type="entry name" value="F1-ATPase_gamma"/>
    <property type="match status" value="1"/>
</dbReference>
<dbReference type="FunFam" id="1.10.287.80:FF:000007">
    <property type="entry name" value="ATP synthase gamma chain"/>
    <property type="match status" value="1"/>
</dbReference>
<dbReference type="FunFam" id="3.40.1380.10:FF:000003">
    <property type="entry name" value="ATP synthase subunit gamma"/>
    <property type="match status" value="1"/>
</dbReference>
<dbReference type="FunFam" id="1.10.287.80:FF:000013">
    <property type="entry name" value="ATP synthase subunit gamma, mitochondrial"/>
    <property type="match status" value="1"/>
</dbReference>
<dbReference type="Gene3D" id="3.40.1380.10">
    <property type="match status" value="1"/>
</dbReference>
<dbReference type="Gene3D" id="1.10.287.80">
    <property type="entry name" value="ATP synthase, gamma subunit, helix hairpin domain"/>
    <property type="match status" value="1"/>
</dbReference>
<dbReference type="InterPro" id="IPR035968">
    <property type="entry name" value="ATP_synth_F1_ATPase_gsu"/>
</dbReference>
<dbReference type="InterPro" id="IPR000131">
    <property type="entry name" value="ATP_synth_F1_gsu"/>
</dbReference>
<dbReference type="InterPro" id="IPR023632">
    <property type="entry name" value="ATP_synth_F1_gsu_CS"/>
</dbReference>
<dbReference type="NCBIfam" id="TIGR01146">
    <property type="entry name" value="ATPsyn_F1gamma"/>
    <property type="match status" value="1"/>
</dbReference>
<dbReference type="PANTHER" id="PTHR11693">
    <property type="entry name" value="ATP SYNTHASE GAMMA CHAIN"/>
    <property type="match status" value="1"/>
</dbReference>
<dbReference type="PANTHER" id="PTHR11693:SF22">
    <property type="entry name" value="ATP SYNTHASE SUBUNIT GAMMA, MITOCHONDRIAL"/>
    <property type="match status" value="1"/>
</dbReference>
<dbReference type="Pfam" id="PF00231">
    <property type="entry name" value="ATP-synt"/>
    <property type="match status" value="1"/>
</dbReference>
<dbReference type="PIRSF" id="PIRSF039089">
    <property type="entry name" value="ATP_synthase_gamma"/>
    <property type="match status" value="1"/>
</dbReference>
<dbReference type="PRINTS" id="PR00126">
    <property type="entry name" value="ATPASEGAMMA"/>
</dbReference>
<dbReference type="SUPFAM" id="SSF52943">
    <property type="entry name" value="ATP synthase (F1-ATPase), gamma subunit"/>
    <property type="match status" value="1"/>
</dbReference>
<dbReference type="PROSITE" id="PS00153">
    <property type="entry name" value="ATPASE_GAMMA"/>
    <property type="match status" value="1"/>
</dbReference>
<accession>Q5RBS9</accession>
<name>ATPG_PONAB</name>
<comment type="function">
    <text evidence="3 4">Subunit gamma, of the mitochondrial membrane ATP synthase complex (F(1)F(0) ATP synthase or Complex V) that produces ATP from ADP in the presence of a proton gradient across the membrane which is generated by electron transport complexes of the respiratory chain. ATP synthase complex consist of a soluble F(1) head domain - the catalytic core - and a membrane F(1) domain - the membrane proton channel. These two domains are linked by a central stalk rotating inside the F(1) region and a stationary peripheral stalk. During catalysis, ATP synthesis in the catalytic domain of F(1) is coupled via a rotary mechanism of the central stalk subunits to proton translocation (By similarity). In vivo, can only synthesize ATP although its ATP hydrolase activity can be activated artificially in vitro (By similarity). With the central stalk subunit delta, is essential for the biogenesis of F(1) catalytic part of the ATP synthase complex namely in the formation of F1 assembly intermediate (By similarity).</text>
</comment>
<comment type="subunit">
    <text evidence="4 5">Component of the ATP synthase complex composed at least of ATP5F1A/subunit alpha, ATP5F1B/subunit beta, ATP5MC1/subunit c (homooctomer), MT-ATP6/subunit a, MT-ATP8/subunit 8, ATP5ME/subunit e, ATP5MF/subunit f, ATP5MG/subunit g, ATP5MK/subunit k, ATP5MJ/subunit j, ATP5F1C/subunit gamma, ATP5F1D/subunit delta, ATP5F1E/subunit epsilon, ATP5PF/subunit F6, ATP5PB/subunit b, ATP5PD/subunit d, ATP5PO/subunit OSCP. ATP synthase complex consists of a soluble F(1) head domain (subunits alpha(3) and beta(3)) - the catalytic core - and a membrane F(0) domain - the membrane proton channel (subunits c, a, 8, e, f, g, k and j). These two domains are linked by a central stalk (subunits gamma, delta, and epsilon) rotating inside the F1 region and a stationary peripheral stalk (subunits F6, b, d, and OSCP) (By similarity). Interacts with FLVCR2; this interaction occurs in the absence of heme and is disrupted upon heme binding (By similarity).</text>
</comment>
<comment type="subcellular location">
    <subcellularLocation>
        <location evidence="2">Mitochondrion inner membrane</location>
        <topology evidence="2">Peripheral membrane protein</topology>
        <orientation evidence="2">Matrix side</orientation>
    </subcellularLocation>
</comment>
<comment type="similarity">
    <text evidence="6">Belongs to the ATPase gamma chain family.</text>
</comment>
<gene>
    <name evidence="4" type="primary">ATP5F1C</name>
    <name type="synonym">ATP5C1</name>
</gene>
<reference key="1">
    <citation type="submission" date="2004-11" db="EMBL/GenBank/DDBJ databases">
        <authorList>
            <consortium name="The German cDNA consortium"/>
        </authorList>
    </citation>
    <scope>NUCLEOTIDE SEQUENCE [LARGE SCALE MRNA]</scope>
    <source>
        <tissue>Heart</tissue>
    </source>
</reference>
<keyword id="KW-0007">Acetylation</keyword>
<keyword id="KW-0066">ATP synthesis</keyword>
<keyword id="KW-0139">CF(1)</keyword>
<keyword id="KW-0375">Hydrogen ion transport</keyword>
<keyword id="KW-0406">Ion transport</keyword>
<keyword id="KW-0472">Membrane</keyword>
<keyword id="KW-0496">Mitochondrion</keyword>
<keyword id="KW-0999">Mitochondrion inner membrane</keyword>
<keyword id="KW-0597">Phosphoprotein</keyword>
<keyword id="KW-1185">Reference proteome</keyword>
<keyword id="KW-0809">Transit peptide</keyword>
<keyword id="KW-0813">Transport</keyword>
<organism>
    <name type="scientific">Pongo abelii</name>
    <name type="common">Sumatran orangutan</name>
    <name type="synonym">Pongo pygmaeus abelii</name>
    <dbReference type="NCBI Taxonomy" id="9601"/>
    <lineage>
        <taxon>Eukaryota</taxon>
        <taxon>Metazoa</taxon>
        <taxon>Chordata</taxon>
        <taxon>Craniata</taxon>
        <taxon>Vertebrata</taxon>
        <taxon>Euteleostomi</taxon>
        <taxon>Mammalia</taxon>
        <taxon>Eutheria</taxon>
        <taxon>Euarchontoglires</taxon>
        <taxon>Primates</taxon>
        <taxon>Haplorrhini</taxon>
        <taxon>Catarrhini</taxon>
        <taxon>Hominidae</taxon>
        <taxon>Pongo</taxon>
    </lineage>
</organism>
<feature type="transit peptide" description="Mitochondrion" evidence="1">
    <location>
        <begin position="1"/>
        <end position="25"/>
    </location>
</feature>
<feature type="chain" id="PRO_0000002687" description="ATP synthase F(1) complex subunit gamma, mitochondrial">
    <location>
        <begin position="26"/>
        <end position="297"/>
    </location>
</feature>
<feature type="modified residue" description="N6-acetyllysine" evidence="5">
    <location>
        <position position="39"/>
    </location>
</feature>
<feature type="modified residue" description="N6-succinyllysine" evidence="5">
    <location>
        <position position="49"/>
    </location>
</feature>
<feature type="modified residue" description="N6-acetyllysine" evidence="4">
    <location>
        <position position="55"/>
    </location>
</feature>
<feature type="modified residue" description="N6-acetyllysine; alternate" evidence="5">
    <location>
        <position position="115"/>
    </location>
</feature>
<feature type="modified residue" description="N6-succinyllysine; alternate" evidence="5">
    <location>
        <position position="115"/>
    </location>
</feature>
<feature type="modified residue" description="Phosphoserine" evidence="4">
    <location>
        <position position="146"/>
    </location>
</feature>
<feature type="modified residue" description="N6-acetyllysine; alternate" evidence="4">
    <location>
        <position position="154"/>
    </location>
</feature>
<feature type="modified residue" description="N6-succinyllysine; alternate" evidence="5">
    <location>
        <position position="154"/>
    </location>
</feature>
<feature type="modified residue" description="N6-acetyllysine" evidence="4">
    <location>
        <position position="197"/>
    </location>
</feature>
<feature type="modified residue" description="N6-succinyllysine" evidence="5">
    <location>
        <position position="270"/>
    </location>
</feature>
<sequence length="297" mass="32867">MFSRAGVAGLSAWTLQPQWIQVRNMATLKDITRRLKSIKNIQKITKSMKMVAAAKYARAERELKPARIYGLGSLALYEKADIKGPEDKKKHLLIGVSSDRGLCGAIHSSIAKQMKSEVATLTAAGKEVMLVGVGDKIRGILYRTHSDQFLVAFKEVGRKPPTFGDASVIALELLNSGYEFDEGSIIFNKFRSVISYKTEEKPIFSLNTVASADSMSIYDDIDADVLQNYQEYNLANIIYYSLKESTTSEQSARMTAMDNASKNASEMIDKLTLTFNRTRQAVITKELIEIISGAAAL</sequence>
<proteinExistence type="evidence at transcript level"/>
<protein>
    <recommendedName>
        <fullName evidence="4">ATP synthase F(1) complex subunit gamma, mitochondrial</fullName>
    </recommendedName>
    <alternativeName>
        <fullName evidence="4">ATP synthase F1 subunit gamma</fullName>
    </alternativeName>
    <alternativeName>
        <fullName>F-ATPase gamma subunit</fullName>
    </alternativeName>
</protein>
<evidence type="ECO:0000250" key="1"/>
<evidence type="ECO:0000250" key="2">
    <source>
        <dbReference type="UniProtKB" id="P05631"/>
    </source>
</evidence>
<evidence type="ECO:0000250" key="3">
    <source>
        <dbReference type="UniProtKB" id="P19483"/>
    </source>
</evidence>
<evidence type="ECO:0000250" key="4">
    <source>
        <dbReference type="UniProtKB" id="P36542"/>
    </source>
</evidence>
<evidence type="ECO:0000250" key="5">
    <source>
        <dbReference type="UniProtKB" id="Q91VR2"/>
    </source>
</evidence>
<evidence type="ECO:0000305" key="6"/>